<name>NSF1C_MOUSE</name>
<sequence>MAEERQDALREFVAVTGTEEDRARFFLESAGWDLQIALASFYEDGGDEDIVTISQATPSSVSRGTAPSDNRVTSFRDLIHDQDEEEEEEEGQRFYAGGSERSGQQIVGPPRKKSPNELVDDLFKGAKEHGAVAVERVTKSPGETSKPRPFAGGGYRLGAAPEEESAYVAGERRRHSGQDVHVVLKLWKTGFSLDNGDLRSYQDPSNAQFLESIRRGEVPAELRRLAHGGQVNLDMEDHRDEDFVKPKGAFKAFTGEGQKLGSTAPQVLNTSSPAQQAENEAKASSSILINEAEPTTNIQIRLADGGRLVQKFNHSHRISDIRLFIVDARPAMAATSFVLMTTFPNKELADENQTLKEANLLNAVIVQRLT</sequence>
<accession>Q9CZ44</accession>
<accession>A2AT03</accession>
<accession>Q80Y15</accession>
<accession>Q8BYL3</accession>
<organism>
    <name type="scientific">Mus musculus</name>
    <name type="common">Mouse</name>
    <dbReference type="NCBI Taxonomy" id="10090"/>
    <lineage>
        <taxon>Eukaryota</taxon>
        <taxon>Metazoa</taxon>
        <taxon>Chordata</taxon>
        <taxon>Craniata</taxon>
        <taxon>Vertebrata</taxon>
        <taxon>Euteleostomi</taxon>
        <taxon>Mammalia</taxon>
        <taxon>Eutheria</taxon>
        <taxon>Euarchontoglires</taxon>
        <taxon>Glires</taxon>
        <taxon>Rodentia</taxon>
        <taxon>Myomorpha</taxon>
        <taxon>Muroidea</taxon>
        <taxon>Muridae</taxon>
        <taxon>Murinae</taxon>
        <taxon>Mus</taxon>
        <taxon>Mus</taxon>
    </lineage>
</organism>
<protein>
    <recommendedName>
        <fullName>NSFL1 cofactor p47</fullName>
    </recommendedName>
    <alternativeName>
        <fullName>p97 cofactor p47</fullName>
    </alternativeName>
</protein>
<gene>
    <name type="primary">Nsfl1c</name>
</gene>
<keyword id="KW-0025">Alternative splicing</keyword>
<keyword id="KW-0158">Chromosome</keyword>
<keyword id="KW-0963">Cytoplasm</keyword>
<keyword id="KW-0206">Cytoskeleton</keyword>
<keyword id="KW-0333">Golgi apparatus</keyword>
<keyword id="KW-0446">Lipid-binding</keyword>
<keyword id="KW-0539">Nucleus</keyword>
<keyword id="KW-0597">Phosphoprotein</keyword>
<keyword id="KW-1185">Reference proteome</keyword>
<feature type="chain" id="PRO_0000210989" description="NSFL1 cofactor p47">
    <location>
        <begin position="1"/>
        <end position="370"/>
    </location>
</feature>
<feature type="domain" description="SEP" evidence="5">
    <location>
        <begin position="179"/>
        <end position="244"/>
    </location>
</feature>
<feature type="domain" description="UBX" evidence="4">
    <location>
        <begin position="291"/>
        <end position="368"/>
    </location>
</feature>
<feature type="region of interest" description="Disordered" evidence="6">
    <location>
        <begin position="54"/>
        <end position="73"/>
    </location>
</feature>
<feature type="region of interest" description="Disordered" evidence="6">
    <location>
        <begin position="80"/>
        <end position="116"/>
    </location>
</feature>
<feature type="region of interest" description="Disordered" evidence="6">
    <location>
        <begin position="138"/>
        <end position="157"/>
    </location>
</feature>
<feature type="short sequence motif" description="Nuclear localization signal">
    <location>
        <begin position="109"/>
        <end position="115"/>
    </location>
</feature>
<feature type="short sequence motif" description="Nuclear localization signal">
    <location>
        <begin position="172"/>
        <end position="175"/>
    </location>
</feature>
<feature type="modified residue" description="Phosphoserine" evidence="3">
    <location>
        <position position="74"/>
    </location>
</feature>
<feature type="modified residue" description="Phosphoserine" evidence="3">
    <location>
        <position position="102"/>
    </location>
</feature>
<feature type="modified residue" description="Phosphoserine" evidence="10 13">
    <location>
        <position position="114"/>
    </location>
</feature>
<feature type="modified residue" description="Phosphoserine" evidence="2">
    <location>
        <position position="140"/>
    </location>
</feature>
<feature type="modified residue" description="Phosphotyrosine" evidence="11">
    <location>
        <position position="167"/>
    </location>
</feature>
<feature type="modified residue" description="Phosphoserine" evidence="10 12 13">
    <location>
        <position position="176"/>
    </location>
</feature>
<feature type="modified residue" description="Phosphoserine" evidence="3">
    <location>
        <position position="192"/>
    </location>
</feature>
<feature type="modified residue" description="Phosphoserine" evidence="13">
    <location>
        <position position="272"/>
    </location>
</feature>
<feature type="splice variant" id="VSP_009264" description="In isoform 2 and isoform 3." evidence="7 8">
    <original>R</original>
    <variation>RSR</variation>
    <location>
        <position position="93"/>
    </location>
</feature>
<feature type="splice variant" id="VSP_009265" description="In isoform 2." evidence="8">
    <original>S</original>
    <variation>R</variation>
    <location>
        <position position="262"/>
    </location>
</feature>
<feature type="splice variant" id="VSP_009266" description="In isoform 2." evidence="8">
    <location>
        <begin position="263"/>
        <end position="370"/>
    </location>
</feature>
<feature type="sequence conflict" description="In Ref. 1; BAC30250." evidence="9" ref="1">
    <original>V</original>
    <variation>A</variation>
    <location>
        <position position="13"/>
    </location>
</feature>
<proteinExistence type="evidence at protein level"/>
<evidence type="ECO:0000250" key="1"/>
<evidence type="ECO:0000250" key="2">
    <source>
        <dbReference type="UniProtKB" id="O35987"/>
    </source>
</evidence>
<evidence type="ECO:0000250" key="3">
    <source>
        <dbReference type="UniProtKB" id="Q9UNZ2"/>
    </source>
</evidence>
<evidence type="ECO:0000255" key="4">
    <source>
        <dbReference type="PROSITE-ProRule" id="PRU00215"/>
    </source>
</evidence>
<evidence type="ECO:0000255" key="5">
    <source>
        <dbReference type="PROSITE-ProRule" id="PRU00732"/>
    </source>
</evidence>
<evidence type="ECO:0000256" key="6">
    <source>
        <dbReference type="SAM" id="MobiDB-lite"/>
    </source>
</evidence>
<evidence type="ECO:0000303" key="7">
    <source>
    </source>
</evidence>
<evidence type="ECO:0000303" key="8">
    <source>
    </source>
</evidence>
<evidence type="ECO:0000305" key="9"/>
<evidence type="ECO:0007744" key="10">
    <source>
    </source>
</evidence>
<evidence type="ECO:0007744" key="11">
    <source>
    </source>
</evidence>
<evidence type="ECO:0007744" key="12">
    <source>
    </source>
</evidence>
<evidence type="ECO:0007744" key="13">
    <source>
    </source>
</evidence>
<comment type="function">
    <text evidence="2 3">Reduces the ATPase activity of VCP. Necessary for the fragmentation of Golgi stacks during mitosis and for VCP-mediated reassembly of Golgi stacks after mitosis. May play a role in VCP-mediated formation of transitional endoplasmic reticulum (tER). Inhibits the activity of CTSL (in vitro). Together with UBXN2B/p37, regulates the centrosomal levels of kinase AURKA/Aurora A during mitotic progression by promoting AURKA removal from centrosomes in prophase. Also, regulates spindle orientation during mitosis.</text>
</comment>
<comment type="subunit">
    <text evidence="1">Part of a ternary complex containing STX5A, NSFL1C and VCP. NSFL1C forms a homotrimer that binds to one end of a VCP homohexamer. The complex binds to membranes enriched in phosphatidylethanolamine-containing lipids and promotes Golgi membrane fusion. Interaction with VCIP135 leads to dissociation of the complex via ATP hydrolysis by VCP. Binds ubiquitin and mono-ubiquitinated proteins via its N-terminal UBA-like domain when bound to VCP (By similarity).</text>
</comment>
<comment type="subcellular location">
    <subcellularLocation>
        <location evidence="2">Nucleus</location>
    </subcellularLocation>
    <subcellularLocation>
        <location evidence="2">Golgi apparatus</location>
        <location evidence="2">Golgi stack</location>
    </subcellularLocation>
    <subcellularLocation>
        <location evidence="2">Chromosome</location>
    </subcellularLocation>
    <subcellularLocation>
        <location evidence="2">Cytoplasm</location>
        <location evidence="2">Cytoskeleton</location>
        <location evidence="2">Microtubule organizing center</location>
        <location evidence="2">Centrosome</location>
    </subcellularLocation>
    <text evidence="2">Predominantly nuclear in interphase cells. Bound to the axial elements of sex chromosomes in pachytene spermatocytes. A small proportion of the protein is cytoplasmic, associated with Golgi stacks. Localizes to centrosome during mitotic prophase and metaphase.</text>
</comment>
<comment type="alternative products">
    <event type="alternative splicing"/>
    <isoform>
        <id>Q9CZ44-1</id>
        <name>1</name>
        <sequence type="displayed"/>
    </isoform>
    <isoform>
        <id>Q9CZ44-2</id>
        <name>2</name>
        <sequence type="described" ref="VSP_009264 VSP_009265 VSP_009266"/>
    </isoform>
    <isoform>
        <id>Q9CZ44-3</id>
        <name>3</name>
        <sequence type="described" ref="VSP_009264"/>
    </isoform>
</comment>
<comment type="PTM">
    <text evidence="1">Phosphorylated during mitosis. Phosphorylation inhibits interaction with Golgi membranes and is required for the fragmentation of the Golgi stacks during mitosis (By similarity).</text>
</comment>
<comment type="similarity">
    <text evidence="9">Belongs to the NSFL1C family.</text>
</comment>
<dbReference type="EMBL" id="AK013024">
    <property type="protein sequence ID" value="BAB28604.1"/>
    <property type="molecule type" value="mRNA"/>
</dbReference>
<dbReference type="EMBL" id="AK039136">
    <property type="protein sequence ID" value="BAC30250.1"/>
    <property type="molecule type" value="mRNA"/>
</dbReference>
<dbReference type="EMBL" id="AL928719">
    <property type="status" value="NOT_ANNOTATED_CDS"/>
    <property type="molecule type" value="Genomic_DNA"/>
</dbReference>
<dbReference type="EMBL" id="BC050936">
    <property type="protein sequence ID" value="AAH50936.1"/>
    <property type="molecule type" value="mRNA"/>
</dbReference>
<dbReference type="CCDS" id="CCDS16868.1">
    <molecule id="Q9CZ44-3"/>
</dbReference>
<dbReference type="CCDS" id="CCDS71160.1">
    <molecule id="Q9CZ44-1"/>
</dbReference>
<dbReference type="RefSeq" id="NP_001278003.1">
    <molecule id="Q9CZ44-1"/>
    <property type="nucleotide sequence ID" value="NM_001291074.1"/>
</dbReference>
<dbReference type="RefSeq" id="NP_938085.1">
    <molecule id="Q9CZ44-3"/>
    <property type="nucleotide sequence ID" value="NM_198326.3"/>
</dbReference>
<dbReference type="BMRB" id="Q9CZ44"/>
<dbReference type="SMR" id="Q9CZ44"/>
<dbReference type="BioGRID" id="239751">
    <property type="interactions" value="44"/>
</dbReference>
<dbReference type="ComplexPortal" id="CPX-264">
    <property type="entry name" value="Vcp-Nsfl1c AAA ATPase complex"/>
</dbReference>
<dbReference type="FunCoup" id="Q9CZ44">
    <property type="interactions" value="4115"/>
</dbReference>
<dbReference type="IntAct" id="Q9CZ44">
    <property type="interactions" value="5"/>
</dbReference>
<dbReference type="MINT" id="Q9CZ44"/>
<dbReference type="STRING" id="10090.ENSMUSP00000086542"/>
<dbReference type="GlyGen" id="Q9CZ44">
    <property type="glycosylation" value="1 site, 1 O-linked glycan (1 site)"/>
</dbReference>
<dbReference type="iPTMnet" id="Q9CZ44"/>
<dbReference type="PhosphoSitePlus" id="Q9CZ44"/>
<dbReference type="REPRODUCTION-2DPAGE" id="Q9CZ44"/>
<dbReference type="CPTAC" id="non-CPTAC-3852"/>
<dbReference type="jPOST" id="Q9CZ44"/>
<dbReference type="PaxDb" id="10090-ENSMUSP00000086542"/>
<dbReference type="PeptideAtlas" id="Q9CZ44"/>
<dbReference type="ProteomicsDB" id="253020">
    <molecule id="Q9CZ44-1"/>
</dbReference>
<dbReference type="ProteomicsDB" id="253021">
    <molecule id="Q9CZ44-2"/>
</dbReference>
<dbReference type="ProteomicsDB" id="253022">
    <molecule id="Q9CZ44-3"/>
</dbReference>
<dbReference type="Pumba" id="Q9CZ44"/>
<dbReference type="TopDownProteomics" id="Q9CZ44-1">
    <molecule id="Q9CZ44-1"/>
</dbReference>
<dbReference type="TopDownProteomics" id="Q9CZ44-2">
    <molecule id="Q9CZ44-2"/>
</dbReference>
<dbReference type="Antibodypedia" id="23083">
    <property type="antibodies" value="112 antibodies from 27 providers"/>
</dbReference>
<dbReference type="DNASU" id="386649"/>
<dbReference type="Ensembl" id="ENSMUST00000028949.16">
    <molecule id="Q9CZ44-1"/>
    <property type="protein sequence ID" value="ENSMUSP00000028949.10"/>
    <property type="gene ID" value="ENSMUSG00000027455.17"/>
</dbReference>
<dbReference type="Ensembl" id="ENSMUST00000089140.13">
    <molecule id="Q9CZ44-3"/>
    <property type="protein sequence ID" value="ENSMUSP00000086542.7"/>
    <property type="gene ID" value="ENSMUSG00000027455.17"/>
</dbReference>
<dbReference type="GeneID" id="386649"/>
<dbReference type="KEGG" id="mmu:386649"/>
<dbReference type="AGR" id="MGI:3042273"/>
<dbReference type="CTD" id="55968"/>
<dbReference type="MGI" id="MGI:3042273">
    <property type="gene designation" value="Nsfl1c"/>
</dbReference>
<dbReference type="VEuPathDB" id="HostDB:ENSMUSG00000027455"/>
<dbReference type="eggNOG" id="KOG2086">
    <property type="taxonomic scope" value="Eukaryota"/>
</dbReference>
<dbReference type="GeneTree" id="ENSGT00520000055567"/>
<dbReference type="InParanoid" id="Q9CZ44"/>
<dbReference type="OMA" id="NKDHTDK"/>
<dbReference type="OrthoDB" id="25887at2759"/>
<dbReference type="TreeFam" id="TF312973"/>
<dbReference type="Reactome" id="R-MMU-9013407">
    <property type="pathway name" value="RHOH GTPase cycle"/>
</dbReference>
<dbReference type="BioGRID-ORCS" id="386649">
    <property type="hits" value="12 hits in 79 CRISPR screens"/>
</dbReference>
<dbReference type="ChiTaRS" id="Nsfl1c">
    <property type="organism name" value="mouse"/>
</dbReference>
<dbReference type="PRO" id="PR:Q9CZ44"/>
<dbReference type="Proteomes" id="UP000000589">
    <property type="component" value="Chromosome 2"/>
</dbReference>
<dbReference type="RNAct" id="Q9CZ44">
    <property type="molecule type" value="protein"/>
</dbReference>
<dbReference type="Bgee" id="ENSMUSG00000027455">
    <property type="expression patterns" value="Expressed in embryonic brain and 76 other cell types or tissues"/>
</dbReference>
<dbReference type="ExpressionAtlas" id="Q9CZ44">
    <property type="expression patterns" value="baseline and differential"/>
</dbReference>
<dbReference type="GO" id="GO:0005813">
    <property type="term" value="C:centrosome"/>
    <property type="evidence" value="ECO:0007669"/>
    <property type="project" value="UniProtKB-SubCell"/>
</dbReference>
<dbReference type="GO" id="GO:0005694">
    <property type="term" value="C:chromosome"/>
    <property type="evidence" value="ECO:0007669"/>
    <property type="project" value="UniProtKB-SubCell"/>
</dbReference>
<dbReference type="GO" id="GO:0005737">
    <property type="term" value="C:cytoplasm"/>
    <property type="evidence" value="ECO:0000303"/>
    <property type="project" value="ComplexPortal"/>
</dbReference>
<dbReference type="GO" id="GO:0005795">
    <property type="term" value="C:Golgi stack"/>
    <property type="evidence" value="ECO:0007669"/>
    <property type="project" value="UniProtKB-SubCell"/>
</dbReference>
<dbReference type="GO" id="GO:0005634">
    <property type="term" value="C:nucleus"/>
    <property type="evidence" value="ECO:0007669"/>
    <property type="project" value="UniProtKB-SubCell"/>
</dbReference>
<dbReference type="GO" id="GO:1990730">
    <property type="term" value="C:VCP-NSFL1C complex"/>
    <property type="evidence" value="ECO:0000353"/>
    <property type="project" value="ComplexPortal"/>
</dbReference>
<dbReference type="GO" id="GO:0008289">
    <property type="term" value="F:lipid binding"/>
    <property type="evidence" value="ECO:0007669"/>
    <property type="project" value="UniProtKB-KW"/>
</dbReference>
<dbReference type="GO" id="GO:0000132">
    <property type="term" value="P:establishment of mitotic spindle orientation"/>
    <property type="evidence" value="ECO:0007669"/>
    <property type="project" value="Ensembl"/>
</dbReference>
<dbReference type="GO" id="GO:1904780">
    <property type="term" value="P:negative regulation of protein localization to centrosome"/>
    <property type="evidence" value="ECO:0007669"/>
    <property type="project" value="Ensembl"/>
</dbReference>
<dbReference type="GO" id="GO:0046604">
    <property type="term" value="P:positive regulation of mitotic centrosome separation"/>
    <property type="evidence" value="ECO:0007669"/>
    <property type="project" value="Ensembl"/>
</dbReference>
<dbReference type="CDD" id="cd14348">
    <property type="entry name" value="UBA_p47"/>
    <property type="match status" value="1"/>
</dbReference>
<dbReference type="CDD" id="cd17162">
    <property type="entry name" value="UBX_UBXN2C"/>
    <property type="match status" value="1"/>
</dbReference>
<dbReference type="FunFam" id="3.10.20.90:FF:000093">
    <property type="entry name" value="NSFL1 (P97) cofactor (P47)"/>
    <property type="match status" value="1"/>
</dbReference>
<dbReference type="FunFam" id="3.30.420.210:FF:000001">
    <property type="entry name" value="NSFL1 (P97) cofactor (P47)"/>
    <property type="match status" value="1"/>
</dbReference>
<dbReference type="FunFam" id="1.10.8.10:FF:000020">
    <property type="entry name" value="NSFL1 (p97) cofactor (p47)"/>
    <property type="match status" value="1"/>
</dbReference>
<dbReference type="Gene3D" id="1.10.8.10">
    <property type="entry name" value="DNA helicase RuvA subunit, C-terminal domain"/>
    <property type="match status" value="1"/>
</dbReference>
<dbReference type="Gene3D" id="3.10.20.90">
    <property type="entry name" value="Phosphatidylinositol 3-kinase Catalytic Subunit, Chain A, domain 1"/>
    <property type="match status" value="1"/>
</dbReference>
<dbReference type="Gene3D" id="3.30.420.210">
    <property type="entry name" value="SEP domain"/>
    <property type="match status" value="1"/>
</dbReference>
<dbReference type="InterPro" id="IPR036241">
    <property type="entry name" value="NSFL1C_SEP_dom_sf"/>
</dbReference>
<dbReference type="InterPro" id="IPR012989">
    <property type="entry name" value="SEP_domain"/>
</dbReference>
<dbReference type="InterPro" id="IPR009060">
    <property type="entry name" value="UBA-like_sf"/>
</dbReference>
<dbReference type="InterPro" id="IPR029071">
    <property type="entry name" value="Ubiquitin-like_domsf"/>
</dbReference>
<dbReference type="InterPro" id="IPR001012">
    <property type="entry name" value="UBX_dom"/>
</dbReference>
<dbReference type="PANTHER" id="PTHR23333:SF24">
    <property type="entry name" value="NSFL1 COFACTOR P47"/>
    <property type="match status" value="1"/>
</dbReference>
<dbReference type="PANTHER" id="PTHR23333">
    <property type="entry name" value="UBX DOMAIN CONTAINING PROTEIN"/>
    <property type="match status" value="1"/>
</dbReference>
<dbReference type="Pfam" id="PF08059">
    <property type="entry name" value="SEP"/>
    <property type="match status" value="1"/>
</dbReference>
<dbReference type="Pfam" id="PF14555">
    <property type="entry name" value="UBA_4"/>
    <property type="match status" value="1"/>
</dbReference>
<dbReference type="Pfam" id="PF00789">
    <property type="entry name" value="UBX"/>
    <property type="match status" value="1"/>
</dbReference>
<dbReference type="SMART" id="SM00553">
    <property type="entry name" value="SEP"/>
    <property type="match status" value="1"/>
</dbReference>
<dbReference type="SMART" id="SM00166">
    <property type="entry name" value="UBX"/>
    <property type="match status" value="1"/>
</dbReference>
<dbReference type="SUPFAM" id="SSF102848">
    <property type="entry name" value="NSFL1 (p97 ATPase) cofactor p47, SEP domain"/>
    <property type="match status" value="1"/>
</dbReference>
<dbReference type="SUPFAM" id="SSF46934">
    <property type="entry name" value="UBA-like"/>
    <property type="match status" value="1"/>
</dbReference>
<dbReference type="SUPFAM" id="SSF54236">
    <property type="entry name" value="Ubiquitin-like"/>
    <property type="match status" value="1"/>
</dbReference>
<dbReference type="PROSITE" id="PS51399">
    <property type="entry name" value="SEP"/>
    <property type="match status" value="1"/>
</dbReference>
<dbReference type="PROSITE" id="PS50033">
    <property type="entry name" value="UBX"/>
    <property type="match status" value="1"/>
</dbReference>
<reference key="1">
    <citation type="journal article" date="2005" name="Science">
        <title>The transcriptional landscape of the mammalian genome.</title>
        <authorList>
            <person name="Carninci P."/>
            <person name="Kasukawa T."/>
            <person name="Katayama S."/>
            <person name="Gough J."/>
            <person name="Frith M.C."/>
            <person name="Maeda N."/>
            <person name="Oyama R."/>
            <person name="Ravasi T."/>
            <person name="Lenhard B."/>
            <person name="Wells C."/>
            <person name="Kodzius R."/>
            <person name="Shimokawa K."/>
            <person name="Bajic V.B."/>
            <person name="Brenner S.E."/>
            <person name="Batalov S."/>
            <person name="Forrest A.R."/>
            <person name="Zavolan M."/>
            <person name="Davis M.J."/>
            <person name="Wilming L.G."/>
            <person name="Aidinis V."/>
            <person name="Allen J.E."/>
            <person name="Ambesi-Impiombato A."/>
            <person name="Apweiler R."/>
            <person name="Aturaliya R.N."/>
            <person name="Bailey T.L."/>
            <person name="Bansal M."/>
            <person name="Baxter L."/>
            <person name="Beisel K.W."/>
            <person name="Bersano T."/>
            <person name="Bono H."/>
            <person name="Chalk A.M."/>
            <person name="Chiu K.P."/>
            <person name="Choudhary V."/>
            <person name="Christoffels A."/>
            <person name="Clutterbuck D.R."/>
            <person name="Crowe M.L."/>
            <person name="Dalla E."/>
            <person name="Dalrymple B.P."/>
            <person name="de Bono B."/>
            <person name="Della Gatta G."/>
            <person name="di Bernardo D."/>
            <person name="Down T."/>
            <person name="Engstrom P."/>
            <person name="Fagiolini M."/>
            <person name="Faulkner G."/>
            <person name="Fletcher C.F."/>
            <person name="Fukushima T."/>
            <person name="Furuno M."/>
            <person name="Futaki S."/>
            <person name="Gariboldi M."/>
            <person name="Georgii-Hemming P."/>
            <person name="Gingeras T.R."/>
            <person name="Gojobori T."/>
            <person name="Green R.E."/>
            <person name="Gustincich S."/>
            <person name="Harbers M."/>
            <person name="Hayashi Y."/>
            <person name="Hensch T.K."/>
            <person name="Hirokawa N."/>
            <person name="Hill D."/>
            <person name="Huminiecki L."/>
            <person name="Iacono M."/>
            <person name="Ikeo K."/>
            <person name="Iwama A."/>
            <person name="Ishikawa T."/>
            <person name="Jakt M."/>
            <person name="Kanapin A."/>
            <person name="Katoh M."/>
            <person name="Kawasawa Y."/>
            <person name="Kelso J."/>
            <person name="Kitamura H."/>
            <person name="Kitano H."/>
            <person name="Kollias G."/>
            <person name="Krishnan S.P."/>
            <person name="Kruger A."/>
            <person name="Kummerfeld S.K."/>
            <person name="Kurochkin I.V."/>
            <person name="Lareau L.F."/>
            <person name="Lazarevic D."/>
            <person name="Lipovich L."/>
            <person name="Liu J."/>
            <person name="Liuni S."/>
            <person name="McWilliam S."/>
            <person name="Madan Babu M."/>
            <person name="Madera M."/>
            <person name="Marchionni L."/>
            <person name="Matsuda H."/>
            <person name="Matsuzawa S."/>
            <person name="Miki H."/>
            <person name="Mignone F."/>
            <person name="Miyake S."/>
            <person name="Morris K."/>
            <person name="Mottagui-Tabar S."/>
            <person name="Mulder N."/>
            <person name="Nakano N."/>
            <person name="Nakauchi H."/>
            <person name="Ng P."/>
            <person name="Nilsson R."/>
            <person name="Nishiguchi S."/>
            <person name="Nishikawa S."/>
            <person name="Nori F."/>
            <person name="Ohara O."/>
            <person name="Okazaki Y."/>
            <person name="Orlando V."/>
            <person name="Pang K.C."/>
            <person name="Pavan W.J."/>
            <person name="Pavesi G."/>
            <person name="Pesole G."/>
            <person name="Petrovsky N."/>
            <person name="Piazza S."/>
            <person name="Reed J."/>
            <person name="Reid J.F."/>
            <person name="Ring B.Z."/>
            <person name="Ringwald M."/>
            <person name="Rost B."/>
            <person name="Ruan Y."/>
            <person name="Salzberg S.L."/>
            <person name="Sandelin A."/>
            <person name="Schneider C."/>
            <person name="Schoenbach C."/>
            <person name="Sekiguchi K."/>
            <person name="Semple C.A."/>
            <person name="Seno S."/>
            <person name="Sessa L."/>
            <person name="Sheng Y."/>
            <person name="Shibata Y."/>
            <person name="Shimada H."/>
            <person name="Shimada K."/>
            <person name="Silva D."/>
            <person name="Sinclair B."/>
            <person name="Sperling S."/>
            <person name="Stupka E."/>
            <person name="Sugiura K."/>
            <person name="Sultana R."/>
            <person name="Takenaka Y."/>
            <person name="Taki K."/>
            <person name="Tammoja K."/>
            <person name="Tan S.L."/>
            <person name="Tang S."/>
            <person name="Taylor M.S."/>
            <person name="Tegner J."/>
            <person name="Teichmann S.A."/>
            <person name="Ueda H.R."/>
            <person name="van Nimwegen E."/>
            <person name="Verardo R."/>
            <person name="Wei C.L."/>
            <person name="Yagi K."/>
            <person name="Yamanishi H."/>
            <person name="Zabarovsky E."/>
            <person name="Zhu S."/>
            <person name="Zimmer A."/>
            <person name="Hide W."/>
            <person name="Bult C."/>
            <person name="Grimmond S.M."/>
            <person name="Teasdale R.D."/>
            <person name="Liu E.T."/>
            <person name="Brusic V."/>
            <person name="Quackenbush J."/>
            <person name="Wahlestedt C."/>
            <person name="Mattick J.S."/>
            <person name="Hume D.A."/>
            <person name="Kai C."/>
            <person name="Sasaki D."/>
            <person name="Tomaru Y."/>
            <person name="Fukuda S."/>
            <person name="Kanamori-Katayama M."/>
            <person name="Suzuki M."/>
            <person name="Aoki J."/>
            <person name="Arakawa T."/>
            <person name="Iida J."/>
            <person name="Imamura K."/>
            <person name="Itoh M."/>
            <person name="Kato T."/>
            <person name="Kawaji H."/>
            <person name="Kawagashira N."/>
            <person name="Kawashima T."/>
            <person name="Kojima M."/>
            <person name="Kondo S."/>
            <person name="Konno H."/>
            <person name="Nakano K."/>
            <person name="Ninomiya N."/>
            <person name="Nishio T."/>
            <person name="Okada M."/>
            <person name="Plessy C."/>
            <person name="Shibata K."/>
            <person name="Shiraki T."/>
            <person name="Suzuki S."/>
            <person name="Tagami M."/>
            <person name="Waki K."/>
            <person name="Watahiki A."/>
            <person name="Okamura-Oho Y."/>
            <person name="Suzuki H."/>
            <person name="Kawai J."/>
            <person name="Hayashizaki Y."/>
        </authorList>
    </citation>
    <scope>NUCLEOTIDE SEQUENCE [LARGE SCALE MRNA] (ISOFORMS 1 AND 2)</scope>
    <source>
        <strain>C57BL/6J</strain>
        <tissue>Embryo</tissue>
        <tissue>Hypothalamus</tissue>
    </source>
</reference>
<reference key="2">
    <citation type="journal article" date="2009" name="PLoS Biol.">
        <title>Lineage-specific biology revealed by a finished genome assembly of the mouse.</title>
        <authorList>
            <person name="Church D.M."/>
            <person name="Goodstadt L."/>
            <person name="Hillier L.W."/>
            <person name="Zody M.C."/>
            <person name="Goldstein S."/>
            <person name="She X."/>
            <person name="Bult C.J."/>
            <person name="Agarwala R."/>
            <person name="Cherry J.L."/>
            <person name="DiCuccio M."/>
            <person name="Hlavina W."/>
            <person name="Kapustin Y."/>
            <person name="Meric P."/>
            <person name="Maglott D."/>
            <person name="Birtle Z."/>
            <person name="Marques A.C."/>
            <person name="Graves T."/>
            <person name="Zhou S."/>
            <person name="Teague B."/>
            <person name="Potamousis K."/>
            <person name="Churas C."/>
            <person name="Place M."/>
            <person name="Herschleb J."/>
            <person name="Runnheim R."/>
            <person name="Forrest D."/>
            <person name="Amos-Landgraf J."/>
            <person name="Schwartz D.C."/>
            <person name="Cheng Z."/>
            <person name="Lindblad-Toh K."/>
            <person name="Eichler E.E."/>
            <person name="Ponting C.P."/>
        </authorList>
    </citation>
    <scope>NUCLEOTIDE SEQUENCE [LARGE SCALE GENOMIC DNA]</scope>
    <source>
        <strain>C57BL/6J</strain>
    </source>
</reference>
<reference key="3">
    <citation type="journal article" date="2004" name="Genome Res.">
        <title>The status, quality, and expansion of the NIH full-length cDNA project: the Mammalian Gene Collection (MGC).</title>
        <authorList>
            <consortium name="The MGC Project Team"/>
        </authorList>
    </citation>
    <scope>NUCLEOTIDE SEQUENCE [LARGE SCALE MRNA] (ISOFORM 3)</scope>
    <source>
        <strain>C57BL/6J</strain>
        <tissue>Brain</tissue>
    </source>
</reference>
<reference key="4">
    <citation type="journal article" date="2007" name="J. Immunol.">
        <title>Quantitative time-resolved phosphoproteomic analysis of mast cell signaling.</title>
        <authorList>
            <person name="Cao L."/>
            <person name="Yu K."/>
            <person name="Banh C."/>
            <person name="Nguyen V."/>
            <person name="Ritz A."/>
            <person name="Raphael B.J."/>
            <person name="Kawakami Y."/>
            <person name="Kawakami T."/>
            <person name="Salomon A.R."/>
        </authorList>
    </citation>
    <scope>PHOSPHORYLATION [LARGE SCALE ANALYSIS] AT TYR-167</scope>
    <scope>IDENTIFICATION BY MASS SPECTROMETRY [LARGE SCALE ANALYSIS]</scope>
    <source>
        <tissue>Mast cell</tissue>
    </source>
</reference>
<reference key="5">
    <citation type="journal article" date="2007" name="Proc. Natl. Acad. Sci. U.S.A.">
        <title>Large-scale phosphorylation analysis of mouse liver.</title>
        <authorList>
            <person name="Villen J."/>
            <person name="Beausoleil S.A."/>
            <person name="Gerber S.A."/>
            <person name="Gygi S.P."/>
        </authorList>
    </citation>
    <scope>PHOSPHORYLATION [LARGE SCALE ANALYSIS] AT SER-114 AND SER-176</scope>
    <scope>IDENTIFICATION BY MASS SPECTROMETRY [LARGE SCALE ANALYSIS]</scope>
    <source>
        <tissue>Liver</tissue>
    </source>
</reference>
<reference key="6">
    <citation type="journal article" date="2009" name="Mol. Cell. Proteomics">
        <title>Large scale localization of protein phosphorylation by use of electron capture dissociation mass spectrometry.</title>
        <authorList>
            <person name="Sweet S.M."/>
            <person name="Bailey C.M."/>
            <person name="Cunningham D.L."/>
            <person name="Heath J.K."/>
            <person name="Cooper H.J."/>
        </authorList>
    </citation>
    <scope>PHOSPHORYLATION [LARGE SCALE ANALYSIS] AT SER-176</scope>
    <scope>IDENTIFICATION BY MASS SPECTROMETRY [LARGE SCALE ANALYSIS]</scope>
    <source>
        <tissue>Embryonic fibroblast</tissue>
    </source>
</reference>
<reference key="7">
    <citation type="journal article" date="2010" name="Cell">
        <title>A tissue-specific atlas of mouse protein phosphorylation and expression.</title>
        <authorList>
            <person name="Huttlin E.L."/>
            <person name="Jedrychowski M.P."/>
            <person name="Elias J.E."/>
            <person name="Goswami T."/>
            <person name="Rad R."/>
            <person name="Beausoleil S.A."/>
            <person name="Villen J."/>
            <person name="Haas W."/>
            <person name="Sowa M.E."/>
            <person name="Gygi S.P."/>
        </authorList>
    </citation>
    <scope>PHOSPHORYLATION [LARGE SCALE ANALYSIS] AT SER-114; SER-176 AND SER-272</scope>
    <scope>IDENTIFICATION BY MASS SPECTROMETRY [LARGE SCALE ANALYSIS]</scope>
    <source>
        <tissue>Brain</tissue>
        <tissue>Brown adipose tissue</tissue>
        <tissue>Heart</tissue>
        <tissue>Kidney</tissue>
        <tissue>Liver</tissue>
        <tissue>Lung</tissue>
        <tissue>Pancreas</tissue>
        <tissue>Spleen</tissue>
        <tissue>Testis</tissue>
    </source>
</reference>